<dbReference type="EMBL" id="CP000911">
    <property type="protein sequence ID" value="ABY38407.1"/>
    <property type="molecule type" value="Genomic_DNA"/>
</dbReference>
<dbReference type="RefSeq" id="WP_006071017.1">
    <property type="nucleotide sequence ID" value="NC_010169.1"/>
</dbReference>
<dbReference type="SMR" id="B0CHA6"/>
<dbReference type="KEGG" id="bmt:BSUIS_A1362"/>
<dbReference type="HOGENOM" id="CLU_019250_2_2_5"/>
<dbReference type="UniPathway" id="UPA00148"/>
<dbReference type="Proteomes" id="UP000008545">
    <property type="component" value="Chromosome I"/>
</dbReference>
<dbReference type="GO" id="GO:0015420">
    <property type="term" value="F:ABC-type vitamin B12 transporter activity"/>
    <property type="evidence" value="ECO:0007669"/>
    <property type="project" value="UniProtKB-UniRule"/>
</dbReference>
<dbReference type="GO" id="GO:0003824">
    <property type="term" value="F:catalytic activity"/>
    <property type="evidence" value="ECO:0007669"/>
    <property type="project" value="InterPro"/>
</dbReference>
<dbReference type="GO" id="GO:0009236">
    <property type="term" value="P:cobalamin biosynthetic process"/>
    <property type="evidence" value="ECO:0007669"/>
    <property type="project" value="UniProtKB-UniRule"/>
</dbReference>
<dbReference type="CDD" id="cd05389">
    <property type="entry name" value="CobQ_N"/>
    <property type="match status" value="1"/>
</dbReference>
<dbReference type="CDD" id="cd01750">
    <property type="entry name" value="GATase1_CobQ"/>
    <property type="match status" value="1"/>
</dbReference>
<dbReference type="Gene3D" id="3.40.50.880">
    <property type="match status" value="1"/>
</dbReference>
<dbReference type="Gene3D" id="3.40.50.300">
    <property type="entry name" value="P-loop containing nucleotide triphosphate hydrolases"/>
    <property type="match status" value="1"/>
</dbReference>
<dbReference type="HAMAP" id="MF_00028">
    <property type="entry name" value="CobQ"/>
    <property type="match status" value="1"/>
</dbReference>
<dbReference type="InterPro" id="IPR029062">
    <property type="entry name" value="Class_I_gatase-like"/>
</dbReference>
<dbReference type="InterPro" id="IPR002586">
    <property type="entry name" value="CobQ/CobB/MinD/ParA_Nub-bd_dom"/>
</dbReference>
<dbReference type="InterPro" id="IPR033949">
    <property type="entry name" value="CobQ_GATase1"/>
</dbReference>
<dbReference type="InterPro" id="IPR047045">
    <property type="entry name" value="CobQ_N"/>
</dbReference>
<dbReference type="InterPro" id="IPR004459">
    <property type="entry name" value="CobQ_synth"/>
</dbReference>
<dbReference type="InterPro" id="IPR011698">
    <property type="entry name" value="GATase_3"/>
</dbReference>
<dbReference type="InterPro" id="IPR027417">
    <property type="entry name" value="P-loop_NTPase"/>
</dbReference>
<dbReference type="NCBIfam" id="TIGR00313">
    <property type="entry name" value="cobQ"/>
    <property type="match status" value="1"/>
</dbReference>
<dbReference type="NCBIfam" id="NF001989">
    <property type="entry name" value="PRK00784.1"/>
    <property type="match status" value="1"/>
</dbReference>
<dbReference type="PANTHER" id="PTHR21343:SF1">
    <property type="entry name" value="COBYRIC ACID SYNTHASE"/>
    <property type="match status" value="1"/>
</dbReference>
<dbReference type="PANTHER" id="PTHR21343">
    <property type="entry name" value="DETHIOBIOTIN SYNTHETASE"/>
    <property type="match status" value="1"/>
</dbReference>
<dbReference type="Pfam" id="PF01656">
    <property type="entry name" value="CbiA"/>
    <property type="match status" value="1"/>
</dbReference>
<dbReference type="Pfam" id="PF07685">
    <property type="entry name" value="GATase_3"/>
    <property type="match status" value="1"/>
</dbReference>
<dbReference type="SUPFAM" id="SSF52317">
    <property type="entry name" value="Class I glutamine amidotransferase-like"/>
    <property type="match status" value="1"/>
</dbReference>
<dbReference type="SUPFAM" id="SSF52540">
    <property type="entry name" value="P-loop containing nucleoside triphosphate hydrolases"/>
    <property type="match status" value="1"/>
</dbReference>
<dbReference type="PROSITE" id="PS51274">
    <property type="entry name" value="GATASE_COBBQ"/>
    <property type="match status" value="1"/>
</dbReference>
<keyword id="KW-0169">Cobalamin biosynthesis</keyword>
<keyword id="KW-0315">Glutamine amidotransferase</keyword>
<accession>B0CHA6</accession>
<reference key="1">
    <citation type="submission" date="2007-12" db="EMBL/GenBank/DDBJ databases">
        <title>Brucella suis ATCC 23445 whole genome shotgun sequencing project.</title>
        <authorList>
            <person name="Setubal J.C."/>
            <person name="Bowns C."/>
            <person name="Boyle S."/>
            <person name="Crasta O.R."/>
            <person name="Czar M.J."/>
            <person name="Dharmanolla C."/>
            <person name="Gillespie J.J."/>
            <person name="Kenyon R.W."/>
            <person name="Lu J."/>
            <person name="Mane S."/>
            <person name="Mohapatra S."/>
            <person name="Nagrani S."/>
            <person name="Purkayastha A."/>
            <person name="Rajasimha H.K."/>
            <person name="Shallom J.M."/>
            <person name="Shallom S."/>
            <person name="Shukla M."/>
            <person name="Snyder E.E."/>
            <person name="Sobral B.W."/>
            <person name="Wattam A.R."/>
            <person name="Will R."/>
            <person name="Williams K."/>
            <person name="Yoo H."/>
            <person name="Bruce D."/>
            <person name="Detter C."/>
            <person name="Munk C."/>
            <person name="Brettin T.S."/>
        </authorList>
    </citation>
    <scope>NUCLEOTIDE SEQUENCE [LARGE SCALE GENOMIC DNA]</scope>
    <source>
        <strain>ATCC 23445 / NCTC 10510</strain>
    </source>
</reference>
<feature type="chain" id="PRO_1000074396" description="Cobyric acid synthase">
    <location>
        <begin position="1"/>
        <end position="483"/>
    </location>
</feature>
<feature type="domain" description="GATase cobBQ-type" evidence="1">
    <location>
        <begin position="251"/>
        <end position="438"/>
    </location>
</feature>
<feature type="active site" description="Nucleophile" evidence="1">
    <location>
        <position position="333"/>
    </location>
</feature>
<feature type="active site" evidence="1">
    <location>
        <position position="430"/>
    </location>
</feature>
<gene>
    <name evidence="1" type="primary">cobQ</name>
    <name type="ordered locus">BSUIS_A1362</name>
</gene>
<evidence type="ECO:0000255" key="1">
    <source>
        <dbReference type="HAMAP-Rule" id="MF_00028"/>
    </source>
</evidence>
<organism>
    <name type="scientific">Brucella suis (strain ATCC 23445 / NCTC 10510)</name>
    <dbReference type="NCBI Taxonomy" id="470137"/>
    <lineage>
        <taxon>Bacteria</taxon>
        <taxon>Pseudomonadati</taxon>
        <taxon>Pseudomonadota</taxon>
        <taxon>Alphaproteobacteria</taxon>
        <taxon>Hyphomicrobiales</taxon>
        <taxon>Brucellaceae</taxon>
        <taxon>Brucella/Ochrobactrum group</taxon>
        <taxon>Brucella</taxon>
    </lineage>
</organism>
<name>COBQ_BRUSI</name>
<proteinExistence type="inferred from homology"/>
<protein>
    <recommendedName>
        <fullName evidence="1">Cobyric acid synthase</fullName>
    </recommendedName>
</protein>
<sequence>MARAIMFQGTGSDVGKSVLVAGLCRVARNRGLKVRPFKPQNMSNNAAVSDDGGEIGRAQWLQALACGVPSSVHMNPVLLKPQTDMGSQLIVQGQVRGEARGRYYQELKPQLMAAVMESFAKVGDGADLVLVEGAGSPAEINLRAGDIANMGFAIHADVPVVLVGDIDRGGVIASLVGTHTILPQEDRAMVRGFLINKFRGDISLFDDGLAAITRFTGWRSFGVVPWLKAVSRLPAEDSVVLERAVRGDKKALIVAVPMLPRIANFDDLDPLKAEPAVEVVMVPPGSSLPADAGLVVLPGTKSTIADLLALRENGWDRELVAHVKRGGHVLGICGGFQMLGRRISDPAGIEGNVRDIEGLGLLDIETMMEPEKVVRNVEAVSLLHDEPLEGYEIHIGRTSGPDMARPFARIGDHDDGAVSPDGRIMGTYLHGVFSADRFRHHFLRALGVEGGQMNYRESVEEALDELAEGLEASLDIDGLFALA</sequence>
<comment type="function">
    <text evidence="1">Catalyzes amidations at positions B, D, E, and G on adenosylcobyrinic A,C-diamide. NH(2) groups are provided by glutamine, and one molecule of ATP is hydrogenolyzed for each amidation.</text>
</comment>
<comment type="pathway">
    <text evidence="1">Cofactor biosynthesis; adenosylcobalamin biosynthesis.</text>
</comment>
<comment type="similarity">
    <text evidence="1">Belongs to the CobB/CobQ family. CobQ subfamily.</text>
</comment>